<comment type="function">
    <text evidence="1">Involved in the catabolism of homogentisate (2,5-dihydroxyphenylacetate or 2,5-OH-PhAc), a central intermediate in the degradation of phenylalanine and tyrosine. Catalyzes the oxidative ring cleavage of the aromatic ring of homogentisate to yield maleylacetoacetate.</text>
</comment>
<comment type="catalytic activity">
    <reaction evidence="1">
        <text>homogentisate + O2 = 4-maleylacetoacetate + H(+)</text>
        <dbReference type="Rhea" id="RHEA:15449"/>
        <dbReference type="ChEBI" id="CHEBI:15378"/>
        <dbReference type="ChEBI" id="CHEBI:15379"/>
        <dbReference type="ChEBI" id="CHEBI:16169"/>
        <dbReference type="ChEBI" id="CHEBI:17105"/>
        <dbReference type="EC" id="1.13.11.5"/>
    </reaction>
</comment>
<comment type="cofactor">
    <cofactor evidence="1">
        <name>Fe cation</name>
        <dbReference type="ChEBI" id="CHEBI:24875"/>
    </cofactor>
</comment>
<comment type="pathway">
    <text evidence="1">Amino-acid degradation; L-phenylalanine degradation; acetoacetate and fumarate from L-phenylalanine: step 4/6.</text>
</comment>
<comment type="subunit">
    <text evidence="1">Hexamer; dimer of trimers.</text>
</comment>
<comment type="similarity">
    <text evidence="1">Belongs to the homogentisate dioxygenase family.</text>
</comment>
<evidence type="ECO:0000255" key="1">
    <source>
        <dbReference type="HAMAP-Rule" id="MF_00334"/>
    </source>
</evidence>
<name>HGD_PSEF5</name>
<organism>
    <name type="scientific">Pseudomonas fluorescens (strain ATCC BAA-477 / NRRL B-23932 / Pf-5)</name>
    <dbReference type="NCBI Taxonomy" id="220664"/>
    <lineage>
        <taxon>Bacteria</taxon>
        <taxon>Pseudomonadati</taxon>
        <taxon>Pseudomonadota</taxon>
        <taxon>Gammaproteobacteria</taxon>
        <taxon>Pseudomonadales</taxon>
        <taxon>Pseudomonadaceae</taxon>
        <taxon>Pseudomonas</taxon>
    </lineage>
</organism>
<proteinExistence type="inferred from homology"/>
<feature type="chain" id="PRO_0000225791" description="Homogentisate 1,2-dioxygenase">
    <location>
        <begin position="1"/>
        <end position="434"/>
    </location>
</feature>
<feature type="active site" description="Proton acceptor" evidence="1">
    <location>
        <position position="289"/>
    </location>
</feature>
<feature type="binding site" evidence="1">
    <location>
        <position position="332"/>
    </location>
    <ligand>
        <name>Fe cation</name>
        <dbReference type="ChEBI" id="CHEBI:24875"/>
    </ligand>
</feature>
<feature type="binding site" evidence="1">
    <location>
        <position position="338"/>
    </location>
    <ligand>
        <name>Fe cation</name>
        <dbReference type="ChEBI" id="CHEBI:24875"/>
    </ligand>
</feature>
<feature type="binding site" evidence="1">
    <location>
        <position position="347"/>
    </location>
    <ligand>
        <name>homogentisate</name>
        <dbReference type="ChEBI" id="CHEBI:16169"/>
    </ligand>
</feature>
<feature type="binding site" evidence="1">
    <location>
        <position position="368"/>
    </location>
    <ligand>
        <name>Fe cation</name>
        <dbReference type="ChEBI" id="CHEBI:24875"/>
    </ligand>
</feature>
<feature type="binding site" evidence="1">
    <location>
        <position position="368"/>
    </location>
    <ligand>
        <name>homogentisate</name>
        <dbReference type="ChEBI" id="CHEBI:16169"/>
    </ligand>
</feature>
<reference key="1">
    <citation type="journal article" date="2005" name="Nat. Biotechnol.">
        <title>Complete genome sequence of the plant commensal Pseudomonas fluorescens Pf-5.</title>
        <authorList>
            <person name="Paulsen I.T."/>
            <person name="Press C.M."/>
            <person name="Ravel J."/>
            <person name="Kobayashi D.Y."/>
            <person name="Myers G.S.A."/>
            <person name="Mavrodi D.V."/>
            <person name="DeBoy R.T."/>
            <person name="Seshadri R."/>
            <person name="Ren Q."/>
            <person name="Madupu R."/>
            <person name="Dodson R.J."/>
            <person name="Durkin A.S."/>
            <person name="Brinkac L.M."/>
            <person name="Daugherty S.C."/>
            <person name="Sullivan S.A."/>
            <person name="Rosovitz M.J."/>
            <person name="Gwinn M.L."/>
            <person name="Zhou L."/>
            <person name="Schneider D.J."/>
            <person name="Cartinhour S.W."/>
            <person name="Nelson W.C."/>
            <person name="Weidman J."/>
            <person name="Watkins K."/>
            <person name="Tran K."/>
            <person name="Khouri H."/>
            <person name="Pierson E.A."/>
            <person name="Pierson L.S. III"/>
            <person name="Thomashow L.S."/>
            <person name="Loper J.E."/>
        </authorList>
    </citation>
    <scope>NUCLEOTIDE SEQUENCE [LARGE SCALE GENOMIC DNA]</scope>
    <source>
        <strain>ATCC BAA-477 / NRRL B-23932 / Pf-5</strain>
    </source>
</reference>
<sequence>MNLDSSASALSYQSGFGNEFASEALPGALPVGQNSPQKAPYGLYAELFSGTAFTMTRSEARRTWMYRIQPSAKHPAFAKLARQLAGGPLGEVTPNRLRWSPLQIPSEPTDFIDGLVAMVANSAAQKPAGISVYHYRANRSMERVFFNADGELLLVPELGRLRIVTELGMLDLEPLEIAVLPRGLKFRIELLDPQARGYVAENHGAPLRLPDLGPIGSNGLANPRDFLAPVAHYEDLRQPTTLVQKYLGELWGCELDHSPLNVVAWHGNNVPYKYDLRRFNTIGTVSFDHPDPSIFTVLTSPTSVPGLANLDFVIFPPRWMVAENTFRPPWFHRNLMNEFMGLIQGAYDAKAEGFLPGGASLHSCMSAHGPDGETCTKAINAQLQPAKIDNTMAFMFETSQVLRPSQFALECPELQNDYDACWASLPVTFNPNRR</sequence>
<protein>
    <recommendedName>
        <fullName evidence="1">Homogentisate 1,2-dioxygenase</fullName>
        <shortName evidence="1">HGDO</shortName>
        <ecNumber evidence="1">1.13.11.5</ecNumber>
    </recommendedName>
    <alternativeName>
        <fullName evidence="1">Homogentisate oxygenase</fullName>
    </alternativeName>
    <alternativeName>
        <fullName evidence="1">Homogentisic acid oxidase</fullName>
    </alternativeName>
    <alternativeName>
        <fullName evidence="1">Homogentisicase</fullName>
    </alternativeName>
</protein>
<dbReference type="EC" id="1.13.11.5" evidence="1"/>
<dbReference type="EMBL" id="CP000076">
    <property type="protein sequence ID" value="AAY90254.1"/>
    <property type="molecule type" value="Genomic_DNA"/>
</dbReference>
<dbReference type="RefSeq" id="WP_011059321.1">
    <property type="nucleotide sequence ID" value="NC_004129.6"/>
</dbReference>
<dbReference type="SMR" id="Q4KI35"/>
<dbReference type="STRING" id="220664.PFL_0967"/>
<dbReference type="KEGG" id="pfl:PFL_0967"/>
<dbReference type="PATRIC" id="fig|220664.5.peg.992"/>
<dbReference type="eggNOG" id="COG3508">
    <property type="taxonomic scope" value="Bacteria"/>
</dbReference>
<dbReference type="HOGENOM" id="CLU_027174_0_0_6"/>
<dbReference type="UniPathway" id="UPA00139">
    <property type="reaction ID" value="UER00339"/>
</dbReference>
<dbReference type="Proteomes" id="UP000008540">
    <property type="component" value="Chromosome"/>
</dbReference>
<dbReference type="GO" id="GO:0005737">
    <property type="term" value="C:cytoplasm"/>
    <property type="evidence" value="ECO:0007669"/>
    <property type="project" value="TreeGrafter"/>
</dbReference>
<dbReference type="GO" id="GO:0004411">
    <property type="term" value="F:homogentisate 1,2-dioxygenase activity"/>
    <property type="evidence" value="ECO:0007669"/>
    <property type="project" value="UniProtKB-UniRule"/>
</dbReference>
<dbReference type="GO" id="GO:0005506">
    <property type="term" value="F:iron ion binding"/>
    <property type="evidence" value="ECO:0007669"/>
    <property type="project" value="UniProtKB-UniRule"/>
</dbReference>
<dbReference type="GO" id="GO:0006559">
    <property type="term" value="P:L-phenylalanine catabolic process"/>
    <property type="evidence" value="ECO:0007669"/>
    <property type="project" value="UniProtKB-UniRule"/>
</dbReference>
<dbReference type="GO" id="GO:0006572">
    <property type="term" value="P:tyrosine catabolic process"/>
    <property type="evidence" value="ECO:0007669"/>
    <property type="project" value="UniProtKB-UniRule"/>
</dbReference>
<dbReference type="CDD" id="cd07000">
    <property type="entry name" value="cupin_HGO_N"/>
    <property type="match status" value="1"/>
</dbReference>
<dbReference type="FunFam" id="2.60.120.10:FF:000036">
    <property type="entry name" value="Homogentisate 1,2-dioxygenase"/>
    <property type="match status" value="1"/>
</dbReference>
<dbReference type="Gene3D" id="2.60.120.10">
    <property type="entry name" value="Jelly Rolls"/>
    <property type="match status" value="1"/>
</dbReference>
<dbReference type="HAMAP" id="MF_00334">
    <property type="entry name" value="Homogentis_dioxygen"/>
    <property type="match status" value="1"/>
</dbReference>
<dbReference type="InterPro" id="IPR046451">
    <property type="entry name" value="HgmA_C"/>
</dbReference>
<dbReference type="InterPro" id="IPR046452">
    <property type="entry name" value="HgmA_N"/>
</dbReference>
<dbReference type="InterPro" id="IPR005708">
    <property type="entry name" value="Homogentis_dOase"/>
</dbReference>
<dbReference type="InterPro" id="IPR022950">
    <property type="entry name" value="Homogentis_dOase_bac"/>
</dbReference>
<dbReference type="InterPro" id="IPR014710">
    <property type="entry name" value="RmlC-like_jellyroll"/>
</dbReference>
<dbReference type="InterPro" id="IPR011051">
    <property type="entry name" value="RmlC_Cupin_sf"/>
</dbReference>
<dbReference type="NCBIfam" id="TIGR01015">
    <property type="entry name" value="hmgA"/>
    <property type="match status" value="1"/>
</dbReference>
<dbReference type="PANTHER" id="PTHR11056">
    <property type="entry name" value="HOMOGENTISATE 1,2-DIOXYGENASE"/>
    <property type="match status" value="1"/>
</dbReference>
<dbReference type="PANTHER" id="PTHR11056:SF0">
    <property type="entry name" value="HOMOGENTISATE 1,2-DIOXYGENASE"/>
    <property type="match status" value="1"/>
</dbReference>
<dbReference type="Pfam" id="PF04209">
    <property type="entry name" value="HgmA_C"/>
    <property type="match status" value="1"/>
</dbReference>
<dbReference type="Pfam" id="PF20510">
    <property type="entry name" value="HgmA_N"/>
    <property type="match status" value="1"/>
</dbReference>
<dbReference type="SUPFAM" id="SSF51182">
    <property type="entry name" value="RmlC-like cupins"/>
    <property type="match status" value="1"/>
</dbReference>
<accession>Q4KI35</accession>
<gene>
    <name evidence="1" type="primary">hmgA</name>
    <name type="ordered locus">PFL_0967</name>
</gene>
<keyword id="KW-0223">Dioxygenase</keyword>
<keyword id="KW-0408">Iron</keyword>
<keyword id="KW-0479">Metal-binding</keyword>
<keyword id="KW-0560">Oxidoreductase</keyword>
<keyword id="KW-0585">Phenylalanine catabolism</keyword>
<keyword id="KW-0828">Tyrosine catabolism</keyword>